<dbReference type="EMBL" id="BC112770">
    <property type="protein sequence ID" value="AAI12771.1"/>
    <property type="molecule type" value="mRNA"/>
</dbReference>
<dbReference type="RefSeq" id="NP_001039645.1">
    <property type="nucleotide sequence ID" value="NM_001046180.1"/>
</dbReference>
<dbReference type="SMR" id="Q2KI49"/>
<dbReference type="FunCoup" id="Q2KI49">
    <property type="interactions" value="789"/>
</dbReference>
<dbReference type="STRING" id="9913.ENSBTAP00000011798"/>
<dbReference type="PaxDb" id="9913-ENSBTAP00000011798"/>
<dbReference type="GeneID" id="514753"/>
<dbReference type="KEGG" id="bta:514753"/>
<dbReference type="CTD" id="54534"/>
<dbReference type="VEuPathDB" id="HostDB:ENSBTAG00000008962"/>
<dbReference type="eggNOG" id="ENOG502S27V">
    <property type="taxonomic scope" value="Eukaryota"/>
</dbReference>
<dbReference type="HOGENOM" id="CLU_137129_0_0_1"/>
<dbReference type="InParanoid" id="Q2KI49"/>
<dbReference type="OMA" id="LMCSAQD"/>
<dbReference type="OrthoDB" id="9939609at2759"/>
<dbReference type="TreeFam" id="TF105895"/>
<dbReference type="Reactome" id="R-BTA-5389840">
    <property type="pathway name" value="Mitochondrial translation elongation"/>
</dbReference>
<dbReference type="Reactome" id="R-BTA-5419276">
    <property type="pathway name" value="Mitochondrial translation termination"/>
</dbReference>
<dbReference type="Proteomes" id="UP000009136">
    <property type="component" value="Chromosome 8"/>
</dbReference>
<dbReference type="Bgee" id="ENSBTAG00000008962">
    <property type="expression patterns" value="Expressed in rumen papilla and 106 other cell types or tissues"/>
</dbReference>
<dbReference type="GO" id="GO:0005743">
    <property type="term" value="C:mitochondrial inner membrane"/>
    <property type="evidence" value="ECO:0000304"/>
    <property type="project" value="Reactome"/>
</dbReference>
<dbReference type="GO" id="GO:0005762">
    <property type="term" value="C:mitochondrial large ribosomal subunit"/>
    <property type="evidence" value="ECO:0000250"/>
    <property type="project" value="UniProtKB"/>
</dbReference>
<dbReference type="InterPro" id="IPR018305">
    <property type="entry name" value="Ribosomal_m50"/>
</dbReference>
<dbReference type="PANTHER" id="PTHR31542">
    <property type="entry name" value="39A RIBOSOMAL PROTEIN L50, MITOCHONDRIAL"/>
    <property type="match status" value="1"/>
</dbReference>
<dbReference type="PANTHER" id="PTHR31542:SF1">
    <property type="entry name" value="LARGE RIBOSOMAL SUBUNIT PROTEIN ML50"/>
    <property type="match status" value="1"/>
</dbReference>
<dbReference type="Pfam" id="PF10501">
    <property type="entry name" value="Ribosomal_L50"/>
    <property type="match status" value="1"/>
</dbReference>
<sequence>MAALWVAGVGRKSLTVVASGAPRREFWSRLRKEKQPVVAETVEEVKKEPILVCPPLRSQAYIPPKDLQSRLESHVKEVFGSSVPTSWQEISLEDVHMKFSFLARLADDLGHAVPNSRLHQMCRVRDVLDFYTVPVQDRSKFDELIASNLPPNLKITWGY</sequence>
<evidence type="ECO:0000250" key="1">
    <source>
        <dbReference type="UniProtKB" id="Q8N5N7"/>
    </source>
</evidence>
<evidence type="ECO:0000269" key="2">
    <source>
    </source>
</evidence>
<evidence type="ECO:0000305" key="3"/>
<accession>Q2KI49</accession>
<feature type="chain" id="PRO_0000262918" description="Large ribosomal subunit protein mL50">
    <location>
        <begin position="1"/>
        <end position="159"/>
    </location>
</feature>
<protein>
    <recommendedName>
        <fullName evidence="3">Large ribosomal subunit protein mL50</fullName>
    </recommendedName>
    <alternativeName>
        <fullName>39S ribosomal protein L50, mitochondrial</fullName>
        <shortName>L50mt</shortName>
        <shortName>MRP-L50</shortName>
    </alternativeName>
</protein>
<gene>
    <name type="primary">MRPL50</name>
</gene>
<organism>
    <name type="scientific">Bos taurus</name>
    <name type="common">Bovine</name>
    <dbReference type="NCBI Taxonomy" id="9913"/>
    <lineage>
        <taxon>Eukaryota</taxon>
        <taxon>Metazoa</taxon>
        <taxon>Chordata</taxon>
        <taxon>Craniata</taxon>
        <taxon>Vertebrata</taxon>
        <taxon>Euteleostomi</taxon>
        <taxon>Mammalia</taxon>
        <taxon>Eutheria</taxon>
        <taxon>Laurasiatheria</taxon>
        <taxon>Artiodactyla</taxon>
        <taxon>Ruminantia</taxon>
        <taxon>Pecora</taxon>
        <taxon>Bovidae</taxon>
        <taxon>Bovinae</taxon>
        <taxon>Bos</taxon>
    </lineage>
</organism>
<name>RM50_BOVIN</name>
<comment type="subunit">
    <text evidence="1">Component of the mitochondrial ribosome large subunit (39S) which comprises a 16S rRNA and about 50 distinct proteins.</text>
</comment>
<comment type="subcellular location">
    <subcellularLocation>
        <location evidence="2">Mitochondrion</location>
    </subcellularLocation>
</comment>
<comment type="similarity">
    <text evidence="3">Belongs to the mitochondrion-specific ribosomal protein mL50 family.</text>
</comment>
<reference key="1">
    <citation type="submission" date="2006-01" db="EMBL/GenBank/DDBJ databases">
        <authorList>
            <consortium name="NIH - Mammalian Gene Collection (MGC) project"/>
        </authorList>
    </citation>
    <scope>NUCLEOTIDE SEQUENCE [LARGE SCALE MRNA]</scope>
    <source>
        <strain>Hereford</strain>
        <tissue>Heart ventricle</tissue>
    </source>
</reference>
<reference key="2">
    <citation type="journal article" date="2001" name="J. Biol. Chem.">
        <title>The large subunit of the mammalian mitochondrial ribosome. Analysis of the complement of ribosomal proteins present.</title>
        <authorList>
            <person name="Koc E.C."/>
            <person name="Burkhart W."/>
            <person name="Blackburn K."/>
            <person name="Moyer M.B."/>
            <person name="Schlatzer D.M."/>
            <person name="Moseley A."/>
            <person name="Spremulli L.L."/>
        </authorList>
    </citation>
    <scope>IDENTIFICATION BY MASS SPECTROMETRY</scope>
    <scope>SUBCELLULAR LOCATION</scope>
</reference>
<keyword id="KW-0496">Mitochondrion</keyword>
<keyword id="KW-1185">Reference proteome</keyword>
<keyword id="KW-0687">Ribonucleoprotein</keyword>
<keyword id="KW-0689">Ribosomal protein</keyword>
<proteinExistence type="evidence at protein level"/>